<gene>
    <name type="ordered locus">Bcer98_2342</name>
</gene>
<keyword id="KW-0963">Cytoplasm</keyword>
<feature type="chain" id="PRO_1000084798" description="UPF0291 protein Bcer98_2342">
    <location>
        <begin position="1"/>
        <end position="79"/>
    </location>
</feature>
<organism>
    <name type="scientific">Bacillus cytotoxicus (strain DSM 22905 / CIP 110041 / 391-98 / NVH 391-98)</name>
    <dbReference type="NCBI Taxonomy" id="315749"/>
    <lineage>
        <taxon>Bacteria</taxon>
        <taxon>Bacillati</taxon>
        <taxon>Bacillota</taxon>
        <taxon>Bacilli</taxon>
        <taxon>Bacillales</taxon>
        <taxon>Bacillaceae</taxon>
        <taxon>Bacillus</taxon>
        <taxon>Bacillus cereus group</taxon>
    </lineage>
</organism>
<name>Y2342_BACCN</name>
<evidence type="ECO:0000255" key="1">
    <source>
        <dbReference type="HAMAP-Rule" id="MF_01103"/>
    </source>
</evidence>
<sequence>MLSHELIERINFLARKAKNEGLTEEEQRERQSLREQYLKGFRQNMLNELKGIKIVNEEGKDITPAKLKALKKKNNVKLN</sequence>
<comment type="subcellular location">
    <subcellularLocation>
        <location evidence="1">Cytoplasm</location>
    </subcellularLocation>
</comment>
<comment type="similarity">
    <text evidence="1">Belongs to the UPF0291 family.</text>
</comment>
<proteinExistence type="inferred from homology"/>
<dbReference type="EMBL" id="CP000764">
    <property type="protein sequence ID" value="ABS22588.1"/>
    <property type="molecule type" value="Genomic_DNA"/>
</dbReference>
<dbReference type="RefSeq" id="WP_012094784.1">
    <property type="nucleotide sequence ID" value="NC_009674.1"/>
</dbReference>
<dbReference type="SMR" id="A7GR30"/>
<dbReference type="STRING" id="315749.Bcer98_2342"/>
<dbReference type="GeneID" id="33897612"/>
<dbReference type="KEGG" id="bcy:Bcer98_2342"/>
<dbReference type="eggNOG" id="COG4224">
    <property type="taxonomic scope" value="Bacteria"/>
</dbReference>
<dbReference type="HOGENOM" id="CLU_173137_0_2_9"/>
<dbReference type="Proteomes" id="UP000002300">
    <property type="component" value="Chromosome"/>
</dbReference>
<dbReference type="GO" id="GO:0005737">
    <property type="term" value="C:cytoplasm"/>
    <property type="evidence" value="ECO:0007669"/>
    <property type="project" value="UniProtKB-SubCell"/>
</dbReference>
<dbReference type="Gene3D" id="1.10.287.540">
    <property type="entry name" value="Helix hairpin bin"/>
    <property type="match status" value="1"/>
</dbReference>
<dbReference type="HAMAP" id="MF_01103">
    <property type="entry name" value="UPF0291"/>
    <property type="match status" value="1"/>
</dbReference>
<dbReference type="InterPro" id="IPR009242">
    <property type="entry name" value="DUF896"/>
</dbReference>
<dbReference type="NCBIfam" id="NF002422">
    <property type="entry name" value="PRK01546.1"/>
    <property type="match status" value="1"/>
</dbReference>
<dbReference type="PANTHER" id="PTHR37300">
    <property type="entry name" value="UPF0291 PROTEIN CBO2609/CLC_2481"/>
    <property type="match status" value="1"/>
</dbReference>
<dbReference type="PANTHER" id="PTHR37300:SF1">
    <property type="entry name" value="UPF0291 PROTEIN YNZC"/>
    <property type="match status" value="1"/>
</dbReference>
<dbReference type="Pfam" id="PF05979">
    <property type="entry name" value="DUF896"/>
    <property type="match status" value="1"/>
</dbReference>
<dbReference type="SUPFAM" id="SSF158221">
    <property type="entry name" value="YnzC-like"/>
    <property type="match status" value="1"/>
</dbReference>
<protein>
    <recommendedName>
        <fullName evidence="1">UPF0291 protein Bcer98_2342</fullName>
    </recommendedName>
</protein>
<reference key="1">
    <citation type="journal article" date="2008" name="Chem. Biol. Interact.">
        <title>Extending the Bacillus cereus group genomics to putative food-borne pathogens of different toxicity.</title>
        <authorList>
            <person name="Lapidus A."/>
            <person name="Goltsman E."/>
            <person name="Auger S."/>
            <person name="Galleron N."/>
            <person name="Segurens B."/>
            <person name="Dossat C."/>
            <person name="Land M.L."/>
            <person name="Broussolle V."/>
            <person name="Brillard J."/>
            <person name="Guinebretiere M.-H."/>
            <person name="Sanchis V."/>
            <person name="Nguen-the C."/>
            <person name="Lereclus D."/>
            <person name="Richardson P."/>
            <person name="Wincker P."/>
            <person name="Weissenbach J."/>
            <person name="Ehrlich S.D."/>
            <person name="Sorokin A."/>
        </authorList>
    </citation>
    <scope>NUCLEOTIDE SEQUENCE [LARGE SCALE GENOMIC DNA]</scope>
    <source>
        <strain>DSM 22905 / CIP 110041 / 391-98 / NVH 391-98</strain>
    </source>
</reference>
<accession>A7GR30</accession>